<sequence length="726" mass="81213">MEPTTQTEPMAVTPKHELENGAAVAANNEEHPSKKQRLESVSITEQEVSDGAPKRMKGVAPIKAEFLVQKSARSQPVEESVVSLSADDAAEAAHYQEREGEQKGKKRASGQNKGRDFGRSEDAKGLCPSRAFSPEFSPKECKFGEKCRFEHDVRTYLKEHKREDLTTFGGICPIWDAKGRCPYGFKCRLVRSHMTERDTSDGRKELILLEDEERKKTARPVVPYASEDGLVNIVSNEDKIAVARRKTTTPRSDAYLTWLDKTSKALEKNLHGRHLEEGGADKGAGAQTKDQVEENRAAYVEPPFLPSEKRRIYFGPETPALAPLTTQGNLPFRRLCIDHGCQFTYSEMAMGMSLIQGQKSEWALMKAHESEALPPTISSTADVVQGYDNSKDLKFGAQIAGNKPWHAIKATELLGRLTPNLRVIDLNCGCPIDQVFREGAGSALLDHPSKLEKMLRGMNAVSEMIPITVKIRTGTRDNSPNATKLIERLVLGGHESSMLNIGPPGVAAITLHGRSRQQRYTKSADWSYIAECAALIKRLNEKKDDVTDTVREPDERMLPNGGKVFFLGNGDCYSHHDYDDHINNAGVDAVMVGRGAIIKPWVFEEIQAGQYLDKSATERLAMVEKYAKYGLDTWGSDEHGVGTTRRFMLEWLSFTYRYVPIGLLEYLPPHIQDRPPAWRGRNELETLLGSPNYKDWIKITEMFLGPAHKDFKFEPKHKSNAYEPQG</sequence>
<accession>A1D1U0</accession>
<dbReference type="EC" id="1.3.1.89" evidence="1"/>
<dbReference type="EC" id="1.3.1.-" evidence="3"/>
<dbReference type="EMBL" id="DS027688">
    <property type="protein sequence ID" value="EAW22383.1"/>
    <property type="molecule type" value="Genomic_DNA"/>
</dbReference>
<dbReference type="RefSeq" id="XP_001264280.1">
    <property type="nucleotide sequence ID" value="XM_001264279.1"/>
</dbReference>
<dbReference type="SMR" id="A1D1U0"/>
<dbReference type="STRING" id="331117.A1D1U0"/>
<dbReference type="EnsemblFungi" id="EAW22383">
    <property type="protein sequence ID" value="EAW22383"/>
    <property type="gene ID" value="NFIA_010640"/>
</dbReference>
<dbReference type="GeneID" id="4591360"/>
<dbReference type="KEGG" id="nfi:NFIA_010640"/>
<dbReference type="VEuPathDB" id="FungiDB:NFIA_010640"/>
<dbReference type="eggNOG" id="KOG2333">
    <property type="taxonomic scope" value="Eukaryota"/>
</dbReference>
<dbReference type="HOGENOM" id="CLU_013299_7_0_1"/>
<dbReference type="OMA" id="WSYIAEC"/>
<dbReference type="OrthoDB" id="259935at2759"/>
<dbReference type="Proteomes" id="UP000006702">
    <property type="component" value="Unassembled WGS sequence"/>
</dbReference>
<dbReference type="GO" id="GO:0005737">
    <property type="term" value="C:cytoplasm"/>
    <property type="evidence" value="ECO:0007669"/>
    <property type="project" value="UniProtKB-SubCell"/>
</dbReference>
<dbReference type="GO" id="GO:0034399">
    <property type="term" value="C:nuclear periphery"/>
    <property type="evidence" value="ECO:0007669"/>
    <property type="project" value="EnsemblFungi"/>
</dbReference>
<dbReference type="GO" id="GO:0050660">
    <property type="term" value="F:flavin adenine dinucleotide binding"/>
    <property type="evidence" value="ECO:0007669"/>
    <property type="project" value="InterPro"/>
</dbReference>
<dbReference type="GO" id="GO:0106414">
    <property type="term" value="F:mRNA dihydrouridine synthase activity"/>
    <property type="evidence" value="ECO:0007669"/>
    <property type="project" value="RHEA"/>
</dbReference>
<dbReference type="GO" id="GO:0003723">
    <property type="term" value="F:RNA binding"/>
    <property type="evidence" value="ECO:0007669"/>
    <property type="project" value="TreeGrafter"/>
</dbReference>
<dbReference type="GO" id="GO:0102265">
    <property type="term" value="F:tRNA-dihydrouridine47 synthase activity"/>
    <property type="evidence" value="ECO:0007669"/>
    <property type="project" value="UniProtKB-EC"/>
</dbReference>
<dbReference type="GO" id="GO:0008270">
    <property type="term" value="F:zinc ion binding"/>
    <property type="evidence" value="ECO:0007669"/>
    <property type="project" value="UniProtKB-KW"/>
</dbReference>
<dbReference type="GO" id="GO:0006397">
    <property type="term" value="P:mRNA processing"/>
    <property type="evidence" value="ECO:0007669"/>
    <property type="project" value="UniProtKB-KW"/>
</dbReference>
<dbReference type="CDD" id="cd02801">
    <property type="entry name" value="DUS_like_FMN"/>
    <property type="match status" value="1"/>
</dbReference>
<dbReference type="FunFam" id="3.20.20.70:FF:000145">
    <property type="entry name" value="tRNA-dihydrouridine(47) synthase [NAD(P)(+)]"/>
    <property type="match status" value="1"/>
</dbReference>
<dbReference type="Gene3D" id="3.20.20.70">
    <property type="entry name" value="Aldolase class I"/>
    <property type="match status" value="1"/>
</dbReference>
<dbReference type="Gene3D" id="4.10.1000.10">
    <property type="entry name" value="Zinc finger, CCCH-type"/>
    <property type="match status" value="1"/>
</dbReference>
<dbReference type="InterPro" id="IPR013785">
    <property type="entry name" value="Aldolase_TIM"/>
</dbReference>
<dbReference type="InterPro" id="IPR035587">
    <property type="entry name" value="DUS-like_FMN-bd"/>
</dbReference>
<dbReference type="InterPro" id="IPR018517">
    <property type="entry name" value="tRNA_hU_synthase_CS"/>
</dbReference>
<dbReference type="InterPro" id="IPR000571">
    <property type="entry name" value="Znf_CCCH"/>
</dbReference>
<dbReference type="PANTHER" id="PTHR45846">
    <property type="entry name" value="TRNA-DIHYDROURIDINE(47) SYNTHASE [NAD(P)(+)]-LIKE"/>
    <property type="match status" value="1"/>
</dbReference>
<dbReference type="PANTHER" id="PTHR45846:SF1">
    <property type="entry name" value="TRNA-DIHYDROURIDINE(47) SYNTHASE [NAD(P)(+)]-LIKE"/>
    <property type="match status" value="1"/>
</dbReference>
<dbReference type="Pfam" id="PF01207">
    <property type="entry name" value="Dus"/>
    <property type="match status" value="2"/>
</dbReference>
<dbReference type="SUPFAM" id="SSF51395">
    <property type="entry name" value="FMN-linked oxidoreductases"/>
    <property type="match status" value="1"/>
</dbReference>
<dbReference type="PROSITE" id="PS01136">
    <property type="entry name" value="UPF0034"/>
    <property type="match status" value="1"/>
</dbReference>
<dbReference type="PROSITE" id="PS50103">
    <property type="entry name" value="ZF_C3H1"/>
    <property type="match status" value="2"/>
</dbReference>
<comment type="function">
    <text evidence="1 3">Catalyzes the synthesis of dihydrouridine, a modified base found in the D-loop of most tRNAs. Specifically modifies U47 in cytoplasmic tRNAs (By similarity). Catalyzes the synthesis of dihydrouridine in some mRNAs, thereby affecting their translation (By similarity).</text>
</comment>
<comment type="catalytic activity">
    <reaction evidence="1">
        <text>5,6-dihydrouridine(47) in tRNA + NAD(+) = uridine(47) in tRNA + NADH + H(+)</text>
        <dbReference type="Rhea" id="RHEA:53364"/>
        <dbReference type="Rhea" id="RHEA-COMP:13539"/>
        <dbReference type="Rhea" id="RHEA-COMP:13540"/>
        <dbReference type="ChEBI" id="CHEBI:15378"/>
        <dbReference type="ChEBI" id="CHEBI:57540"/>
        <dbReference type="ChEBI" id="CHEBI:57945"/>
        <dbReference type="ChEBI" id="CHEBI:65315"/>
        <dbReference type="ChEBI" id="CHEBI:74443"/>
        <dbReference type="EC" id="1.3.1.89"/>
    </reaction>
    <physiologicalReaction direction="right-to-left" evidence="1">
        <dbReference type="Rhea" id="RHEA:53366"/>
    </physiologicalReaction>
</comment>
<comment type="catalytic activity">
    <reaction evidence="1">
        <text>5,6-dihydrouridine(47) in tRNA + NADP(+) = uridine(47) in tRNA + NADPH + H(+)</text>
        <dbReference type="Rhea" id="RHEA:53360"/>
        <dbReference type="Rhea" id="RHEA-COMP:13539"/>
        <dbReference type="Rhea" id="RHEA-COMP:13540"/>
        <dbReference type="ChEBI" id="CHEBI:15378"/>
        <dbReference type="ChEBI" id="CHEBI:57783"/>
        <dbReference type="ChEBI" id="CHEBI:58349"/>
        <dbReference type="ChEBI" id="CHEBI:65315"/>
        <dbReference type="ChEBI" id="CHEBI:74443"/>
        <dbReference type="EC" id="1.3.1.89"/>
    </reaction>
    <physiologicalReaction direction="right-to-left" evidence="1">
        <dbReference type="Rhea" id="RHEA:53362"/>
    </physiologicalReaction>
</comment>
<comment type="catalytic activity">
    <reaction evidence="3">
        <text>a 5,6-dihydrouridine in mRNA + NAD(+) = a uridine in mRNA + NADH + H(+)</text>
        <dbReference type="Rhea" id="RHEA:69851"/>
        <dbReference type="Rhea" id="RHEA-COMP:14658"/>
        <dbReference type="Rhea" id="RHEA-COMP:17789"/>
        <dbReference type="ChEBI" id="CHEBI:15378"/>
        <dbReference type="ChEBI" id="CHEBI:57540"/>
        <dbReference type="ChEBI" id="CHEBI:57945"/>
        <dbReference type="ChEBI" id="CHEBI:65315"/>
        <dbReference type="ChEBI" id="CHEBI:74443"/>
    </reaction>
    <physiologicalReaction direction="right-to-left" evidence="3">
        <dbReference type="Rhea" id="RHEA:69853"/>
    </physiologicalReaction>
</comment>
<comment type="catalytic activity">
    <reaction evidence="3">
        <text>a 5,6-dihydrouridine in mRNA + NADP(+) = a uridine in mRNA + NADPH + H(+)</text>
        <dbReference type="Rhea" id="RHEA:69855"/>
        <dbReference type="Rhea" id="RHEA-COMP:14658"/>
        <dbReference type="Rhea" id="RHEA-COMP:17789"/>
        <dbReference type="ChEBI" id="CHEBI:15378"/>
        <dbReference type="ChEBI" id="CHEBI:57783"/>
        <dbReference type="ChEBI" id="CHEBI:58349"/>
        <dbReference type="ChEBI" id="CHEBI:65315"/>
        <dbReference type="ChEBI" id="CHEBI:74443"/>
    </reaction>
    <physiologicalReaction direction="right-to-left" evidence="3">
        <dbReference type="Rhea" id="RHEA:69857"/>
    </physiologicalReaction>
</comment>
<comment type="cofactor">
    <cofactor evidence="2">
        <name>FMN</name>
        <dbReference type="ChEBI" id="CHEBI:58210"/>
    </cofactor>
</comment>
<comment type="subcellular location">
    <subcellularLocation>
        <location evidence="1">Cytoplasm</location>
    </subcellularLocation>
    <subcellularLocation>
        <location evidence="1">Nucleus</location>
    </subcellularLocation>
</comment>
<comment type="similarity">
    <text evidence="6">Belongs to the Dus family. Dus3 subfamily.</text>
</comment>
<name>DUS3_NEOFI</name>
<organism>
    <name type="scientific">Neosartorya fischeri (strain ATCC 1020 / DSM 3700 / CBS 544.65 / FGSC A1164 / JCM 1740 / NRRL 181 / WB 181)</name>
    <name type="common">Aspergillus fischerianus</name>
    <dbReference type="NCBI Taxonomy" id="331117"/>
    <lineage>
        <taxon>Eukaryota</taxon>
        <taxon>Fungi</taxon>
        <taxon>Dikarya</taxon>
        <taxon>Ascomycota</taxon>
        <taxon>Pezizomycotina</taxon>
        <taxon>Eurotiomycetes</taxon>
        <taxon>Eurotiomycetidae</taxon>
        <taxon>Eurotiales</taxon>
        <taxon>Aspergillaceae</taxon>
        <taxon>Aspergillus</taxon>
        <taxon>Aspergillus subgen. Fumigati</taxon>
    </lineage>
</organism>
<protein>
    <recommendedName>
        <fullName>tRNA-dihydrouridine(47) synthase [NAD(P)(+)]</fullName>
        <ecNumber evidence="1">1.3.1.89</ecNumber>
    </recommendedName>
    <alternativeName>
        <fullName>mRNA-dihydrouridine synthase dus3</fullName>
        <ecNumber evidence="3">1.3.1.-</ecNumber>
    </alternativeName>
    <alternativeName>
        <fullName>tRNA-dihydrouridine synthase 3</fullName>
    </alternativeName>
</protein>
<feature type="chain" id="PRO_0000330243" description="tRNA-dihydrouridine(47) synthase [NAD(P)(+)]">
    <location>
        <begin position="1"/>
        <end position="726"/>
    </location>
</feature>
<feature type="zinc finger region" description="C3H1-type 1" evidence="4">
    <location>
        <begin position="121"/>
        <end position="154"/>
    </location>
</feature>
<feature type="zinc finger region" description="C3H1-type 2" evidence="4">
    <location>
        <begin position="171"/>
        <end position="196"/>
    </location>
</feature>
<feature type="region of interest" description="Disordered" evidence="5">
    <location>
        <begin position="24"/>
        <end position="56"/>
    </location>
</feature>
<feature type="region of interest" description="Disordered" evidence="5">
    <location>
        <begin position="68"/>
        <end position="124"/>
    </location>
</feature>
<feature type="compositionally biased region" description="Basic and acidic residues" evidence="5">
    <location>
        <begin position="28"/>
        <end position="38"/>
    </location>
</feature>
<feature type="compositionally biased region" description="Basic and acidic residues" evidence="5">
    <location>
        <begin position="94"/>
        <end position="103"/>
    </location>
</feature>
<feature type="compositionally biased region" description="Basic and acidic residues" evidence="5">
    <location>
        <begin position="113"/>
        <end position="124"/>
    </location>
</feature>
<feature type="active site" description="Proton donor" evidence="2">
    <location>
        <position position="430"/>
    </location>
</feature>
<feature type="binding site" evidence="2">
    <location>
        <begin position="323"/>
        <end position="325"/>
    </location>
    <ligand>
        <name>FMN</name>
        <dbReference type="ChEBI" id="CHEBI:58210"/>
    </ligand>
</feature>
<feature type="binding site" evidence="2">
    <location>
        <position position="398"/>
    </location>
    <ligand>
        <name>FMN</name>
        <dbReference type="ChEBI" id="CHEBI:58210"/>
    </ligand>
</feature>
<feature type="binding site" evidence="2">
    <location>
        <position position="470"/>
    </location>
    <ligand>
        <name>FMN</name>
        <dbReference type="ChEBI" id="CHEBI:58210"/>
    </ligand>
</feature>
<feature type="binding site" evidence="2">
    <location>
        <position position="512"/>
    </location>
    <ligand>
        <name>FMN</name>
        <dbReference type="ChEBI" id="CHEBI:58210"/>
    </ligand>
</feature>
<feature type="binding site" evidence="2">
    <location>
        <begin position="569"/>
        <end position="571"/>
    </location>
    <ligand>
        <name>FMN</name>
        <dbReference type="ChEBI" id="CHEBI:58210"/>
    </ligand>
</feature>
<feature type="binding site" evidence="2">
    <location>
        <begin position="593"/>
        <end position="594"/>
    </location>
    <ligand>
        <name>FMN</name>
        <dbReference type="ChEBI" id="CHEBI:58210"/>
    </ligand>
</feature>
<keyword id="KW-0963">Cytoplasm</keyword>
<keyword id="KW-0285">Flavoprotein</keyword>
<keyword id="KW-0288">FMN</keyword>
<keyword id="KW-0479">Metal-binding</keyword>
<keyword id="KW-0507">mRNA processing</keyword>
<keyword id="KW-0520">NAD</keyword>
<keyword id="KW-0521">NADP</keyword>
<keyword id="KW-0539">Nucleus</keyword>
<keyword id="KW-0560">Oxidoreductase</keyword>
<keyword id="KW-1185">Reference proteome</keyword>
<keyword id="KW-0677">Repeat</keyword>
<keyword id="KW-0819">tRNA processing</keyword>
<keyword id="KW-0862">Zinc</keyword>
<keyword id="KW-0863">Zinc-finger</keyword>
<reference key="1">
    <citation type="journal article" date="2008" name="PLoS Genet.">
        <title>Genomic islands in the pathogenic filamentous fungus Aspergillus fumigatus.</title>
        <authorList>
            <person name="Fedorova N.D."/>
            <person name="Khaldi N."/>
            <person name="Joardar V.S."/>
            <person name="Maiti R."/>
            <person name="Amedeo P."/>
            <person name="Anderson M.J."/>
            <person name="Crabtree J."/>
            <person name="Silva J.C."/>
            <person name="Badger J.H."/>
            <person name="Albarraq A."/>
            <person name="Angiuoli S."/>
            <person name="Bussey H."/>
            <person name="Bowyer P."/>
            <person name="Cotty P.J."/>
            <person name="Dyer P.S."/>
            <person name="Egan A."/>
            <person name="Galens K."/>
            <person name="Fraser-Liggett C.M."/>
            <person name="Haas B.J."/>
            <person name="Inman J.M."/>
            <person name="Kent R."/>
            <person name="Lemieux S."/>
            <person name="Malavazi I."/>
            <person name="Orvis J."/>
            <person name="Roemer T."/>
            <person name="Ronning C.M."/>
            <person name="Sundaram J.P."/>
            <person name="Sutton G."/>
            <person name="Turner G."/>
            <person name="Venter J.C."/>
            <person name="White O.R."/>
            <person name="Whitty B.R."/>
            <person name="Youngman P."/>
            <person name="Wolfe K.H."/>
            <person name="Goldman G.H."/>
            <person name="Wortman J.R."/>
            <person name="Jiang B."/>
            <person name="Denning D.W."/>
            <person name="Nierman W.C."/>
        </authorList>
    </citation>
    <scope>NUCLEOTIDE SEQUENCE [LARGE SCALE GENOMIC DNA]</scope>
    <source>
        <strain>ATCC 1020 / DSM 3700 / CBS 544.65 / FGSC A1164 / JCM 1740 / NRRL 181 / WB 181</strain>
    </source>
</reference>
<gene>
    <name type="primary">dus3</name>
    <name type="ORF">NFIA_010640</name>
</gene>
<evidence type="ECO:0000250" key="1">
    <source>
        <dbReference type="UniProtKB" id="Q06053"/>
    </source>
</evidence>
<evidence type="ECO:0000250" key="2">
    <source>
        <dbReference type="UniProtKB" id="Q5SMC7"/>
    </source>
</evidence>
<evidence type="ECO:0000250" key="3">
    <source>
        <dbReference type="UniProtKB" id="Q9UTH9"/>
    </source>
</evidence>
<evidence type="ECO:0000255" key="4">
    <source>
        <dbReference type="PROSITE-ProRule" id="PRU00723"/>
    </source>
</evidence>
<evidence type="ECO:0000256" key="5">
    <source>
        <dbReference type="SAM" id="MobiDB-lite"/>
    </source>
</evidence>
<evidence type="ECO:0000305" key="6"/>
<proteinExistence type="inferred from homology"/>